<reference key="1">
    <citation type="journal article" date="2008" name="J. Bacteriol.">
        <title>Insights into the environmental resistance gene pool from the genome sequence of the multidrug-resistant environmental isolate Escherichia coli SMS-3-5.</title>
        <authorList>
            <person name="Fricke W.F."/>
            <person name="Wright M.S."/>
            <person name="Lindell A.H."/>
            <person name="Harkins D.M."/>
            <person name="Baker-Austin C."/>
            <person name="Ravel J."/>
            <person name="Stepanauskas R."/>
        </authorList>
    </citation>
    <scope>NUCLEOTIDE SEQUENCE [LARGE SCALE GENOMIC DNA]</scope>
    <source>
        <strain>SMS-3-5 / SECEC</strain>
    </source>
</reference>
<organism>
    <name type="scientific">Escherichia coli (strain SMS-3-5 / SECEC)</name>
    <dbReference type="NCBI Taxonomy" id="439855"/>
    <lineage>
        <taxon>Bacteria</taxon>
        <taxon>Pseudomonadati</taxon>
        <taxon>Pseudomonadota</taxon>
        <taxon>Gammaproteobacteria</taxon>
        <taxon>Enterobacterales</taxon>
        <taxon>Enterobacteriaceae</taxon>
        <taxon>Escherichia</taxon>
    </lineage>
</organism>
<dbReference type="EC" id="3.1.21.10" evidence="1"/>
<dbReference type="EMBL" id="CP000970">
    <property type="protein sequence ID" value="ACB18268.1"/>
    <property type="molecule type" value="Genomic_DNA"/>
</dbReference>
<dbReference type="RefSeq" id="WP_001295503.1">
    <property type="nucleotide sequence ID" value="NC_010498.1"/>
</dbReference>
<dbReference type="SMR" id="B1LD08"/>
<dbReference type="GeneID" id="89516631"/>
<dbReference type="KEGG" id="ecm:EcSMS35_1323"/>
<dbReference type="HOGENOM" id="CLU_091257_2_1_6"/>
<dbReference type="Proteomes" id="UP000007011">
    <property type="component" value="Chromosome"/>
</dbReference>
<dbReference type="GO" id="GO:0005737">
    <property type="term" value="C:cytoplasm"/>
    <property type="evidence" value="ECO:0007669"/>
    <property type="project" value="UniProtKB-SubCell"/>
</dbReference>
<dbReference type="GO" id="GO:0048476">
    <property type="term" value="C:Holliday junction resolvase complex"/>
    <property type="evidence" value="ECO:0007669"/>
    <property type="project" value="UniProtKB-UniRule"/>
</dbReference>
<dbReference type="GO" id="GO:0008821">
    <property type="term" value="F:crossover junction DNA endonuclease activity"/>
    <property type="evidence" value="ECO:0007669"/>
    <property type="project" value="UniProtKB-UniRule"/>
</dbReference>
<dbReference type="GO" id="GO:0003677">
    <property type="term" value="F:DNA binding"/>
    <property type="evidence" value="ECO:0007669"/>
    <property type="project" value="UniProtKB-KW"/>
</dbReference>
<dbReference type="GO" id="GO:0000287">
    <property type="term" value="F:magnesium ion binding"/>
    <property type="evidence" value="ECO:0007669"/>
    <property type="project" value="UniProtKB-UniRule"/>
</dbReference>
<dbReference type="GO" id="GO:0006310">
    <property type="term" value="P:DNA recombination"/>
    <property type="evidence" value="ECO:0007669"/>
    <property type="project" value="UniProtKB-UniRule"/>
</dbReference>
<dbReference type="GO" id="GO:0006281">
    <property type="term" value="P:DNA repair"/>
    <property type="evidence" value="ECO:0007669"/>
    <property type="project" value="UniProtKB-UniRule"/>
</dbReference>
<dbReference type="CDD" id="cd16962">
    <property type="entry name" value="RuvC"/>
    <property type="match status" value="1"/>
</dbReference>
<dbReference type="FunFam" id="3.30.420.10:FF:000002">
    <property type="entry name" value="Crossover junction endodeoxyribonuclease RuvC"/>
    <property type="match status" value="1"/>
</dbReference>
<dbReference type="Gene3D" id="3.30.420.10">
    <property type="entry name" value="Ribonuclease H-like superfamily/Ribonuclease H"/>
    <property type="match status" value="1"/>
</dbReference>
<dbReference type="HAMAP" id="MF_00034">
    <property type="entry name" value="RuvC"/>
    <property type="match status" value="1"/>
</dbReference>
<dbReference type="InterPro" id="IPR012337">
    <property type="entry name" value="RNaseH-like_sf"/>
</dbReference>
<dbReference type="InterPro" id="IPR036397">
    <property type="entry name" value="RNaseH_sf"/>
</dbReference>
<dbReference type="InterPro" id="IPR020563">
    <property type="entry name" value="X-over_junc_endoDNase_Mg_BS"/>
</dbReference>
<dbReference type="InterPro" id="IPR002176">
    <property type="entry name" value="X-over_junc_endoDNase_RuvC"/>
</dbReference>
<dbReference type="NCBIfam" id="NF000711">
    <property type="entry name" value="PRK00039.2-1"/>
    <property type="match status" value="1"/>
</dbReference>
<dbReference type="NCBIfam" id="TIGR00228">
    <property type="entry name" value="ruvC"/>
    <property type="match status" value="1"/>
</dbReference>
<dbReference type="PANTHER" id="PTHR30194">
    <property type="entry name" value="CROSSOVER JUNCTION ENDODEOXYRIBONUCLEASE RUVC"/>
    <property type="match status" value="1"/>
</dbReference>
<dbReference type="PANTHER" id="PTHR30194:SF3">
    <property type="entry name" value="CROSSOVER JUNCTION ENDODEOXYRIBONUCLEASE RUVC"/>
    <property type="match status" value="1"/>
</dbReference>
<dbReference type="Pfam" id="PF02075">
    <property type="entry name" value="RuvC"/>
    <property type="match status" value="1"/>
</dbReference>
<dbReference type="PRINTS" id="PR00696">
    <property type="entry name" value="RSOLVASERUVC"/>
</dbReference>
<dbReference type="SUPFAM" id="SSF53098">
    <property type="entry name" value="Ribonuclease H-like"/>
    <property type="match status" value="1"/>
</dbReference>
<dbReference type="PROSITE" id="PS01321">
    <property type="entry name" value="RUVC"/>
    <property type="match status" value="1"/>
</dbReference>
<accession>B1LD08</accession>
<name>RUVC_ECOSM</name>
<evidence type="ECO:0000255" key="1">
    <source>
        <dbReference type="HAMAP-Rule" id="MF_00034"/>
    </source>
</evidence>
<protein>
    <recommendedName>
        <fullName evidence="1">Crossover junction endodeoxyribonuclease RuvC</fullName>
        <ecNumber evidence="1">3.1.21.10</ecNumber>
    </recommendedName>
    <alternativeName>
        <fullName evidence="1">Holliday junction nuclease RuvC</fullName>
    </alternativeName>
    <alternativeName>
        <fullName evidence="1">Holliday junction resolvase RuvC</fullName>
    </alternativeName>
</protein>
<comment type="function">
    <text evidence="1">The RuvA-RuvB-RuvC complex processes Holliday junction (HJ) DNA during genetic recombination and DNA repair. Endonuclease that resolves HJ intermediates. Cleaves cruciform DNA by making single-stranded nicks across the HJ at symmetrical positions within the homologous arms, yielding a 5'-phosphate and a 3'-hydroxyl group; requires a central core of homology in the junction. The consensus cleavage sequence is 5'-(A/T)TT(C/G)-3'. Cleavage occurs on the 3'-side of the TT dinucleotide at the point of strand exchange. HJ branch migration catalyzed by RuvA-RuvB allows RuvC to scan DNA until it finds its consensus sequence, where it cleaves and resolves the cruciform DNA.</text>
</comment>
<comment type="catalytic activity">
    <reaction evidence="1">
        <text>Endonucleolytic cleavage at a junction such as a reciprocal single-stranded crossover between two homologous DNA duplexes (Holliday junction).</text>
        <dbReference type="EC" id="3.1.21.10"/>
    </reaction>
</comment>
<comment type="cofactor">
    <cofactor evidence="1">
        <name>Mg(2+)</name>
        <dbReference type="ChEBI" id="CHEBI:18420"/>
    </cofactor>
    <text evidence="1">Binds 2 Mg(2+) ion per subunit.</text>
</comment>
<comment type="subunit">
    <text evidence="1">Homodimer which binds Holliday junction (HJ) DNA. The HJ becomes 2-fold symmetrical on binding to RuvC with unstacked arms; it has a different conformation from HJ DNA in complex with RuvA. In the full resolvosome a probable DNA-RuvA(4)-RuvB(12)-RuvC(2) complex forms which resolves the HJ.</text>
</comment>
<comment type="subcellular location">
    <subcellularLocation>
        <location evidence="1">Cytoplasm</location>
    </subcellularLocation>
</comment>
<comment type="similarity">
    <text evidence="1">Belongs to the RuvC family.</text>
</comment>
<proteinExistence type="inferred from homology"/>
<keyword id="KW-0963">Cytoplasm</keyword>
<keyword id="KW-0227">DNA damage</keyword>
<keyword id="KW-0233">DNA recombination</keyword>
<keyword id="KW-0234">DNA repair</keyword>
<keyword id="KW-0238">DNA-binding</keyword>
<keyword id="KW-0255">Endonuclease</keyword>
<keyword id="KW-0378">Hydrolase</keyword>
<keyword id="KW-0460">Magnesium</keyword>
<keyword id="KW-0479">Metal-binding</keyword>
<keyword id="KW-0540">Nuclease</keyword>
<feature type="chain" id="PRO_1000195251" description="Crossover junction endodeoxyribonuclease RuvC">
    <location>
        <begin position="1"/>
        <end position="173"/>
    </location>
</feature>
<feature type="active site" evidence="1">
    <location>
        <position position="8"/>
    </location>
</feature>
<feature type="active site" evidence="1">
    <location>
        <position position="67"/>
    </location>
</feature>
<feature type="active site" evidence="1">
    <location>
        <position position="139"/>
    </location>
</feature>
<feature type="binding site" evidence="1">
    <location>
        <position position="8"/>
    </location>
    <ligand>
        <name>Mg(2+)</name>
        <dbReference type="ChEBI" id="CHEBI:18420"/>
        <label>1</label>
    </ligand>
</feature>
<feature type="binding site" evidence="1">
    <location>
        <position position="67"/>
    </location>
    <ligand>
        <name>Mg(2+)</name>
        <dbReference type="ChEBI" id="CHEBI:18420"/>
        <label>2</label>
    </ligand>
</feature>
<feature type="binding site" evidence="1">
    <location>
        <position position="139"/>
    </location>
    <ligand>
        <name>Mg(2+)</name>
        <dbReference type="ChEBI" id="CHEBI:18420"/>
        <label>1</label>
    </ligand>
</feature>
<gene>
    <name evidence="1" type="primary">ruvC</name>
    <name type="ordered locus">EcSMS35_1323</name>
</gene>
<sequence length="173" mass="18747">MAIILGIDPGSRVTGYGVIRQVGRQLSYLGSGCIRTKVDDLPSRLKLIYAGVTEIITQFQPDYFAIEQVFMAKNADSALKLGQARGVAIVAAVNQELPVFEYAARQVKQTVVGIGSAEKSQVQHMVRTLLKLPANPQADAADALAIAITHCHVSQNAMQMSESRLNLARGRLR</sequence>